<name>SYH_PICTO</name>
<dbReference type="EC" id="6.1.1.21" evidence="1"/>
<dbReference type="EMBL" id="AE017261">
    <property type="protein sequence ID" value="AAT43097.1"/>
    <property type="molecule type" value="Genomic_DNA"/>
</dbReference>
<dbReference type="RefSeq" id="WP_011177313.1">
    <property type="nucleotide sequence ID" value="NC_005877.1"/>
</dbReference>
<dbReference type="SMR" id="Q6L1Q5"/>
<dbReference type="FunCoup" id="Q6L1Q5">
    <property type="interactions" value="189"/>
</dbReference>
<dbReference type="STRING" id="263820.PTO0512"/>
<dbReference type="PaxDb" id="263820-PTO0512"/>
<dbReference type="GeneID" id="2843919"/>
<dbReference type="KEGG" id="pto:PTO0512"/>
<dbReference type="PATRIC" id="fig|263820.9.peg.539"/>
<dbReference type="eggNOG" id="arCOG00404">
    <property type="taxonomic scope" value="Archaea"/>
</dbReference>
<dbReference type="HOGENOM" id="CLU_025113_3_1_2"/>
<dbReference type="InParanoid" id="Q6L1Q5"/>
<dbReference type="OrthoDB" id="8659at2157"/>
<dbReference type="Proteomes" id="UP000000438">
    <property type="component" value="Chromosome"/>
</dbReference>
<dbReference type="GO" id="GO:0005737">
    <property type="term" value="C:cytoplasm"/>
    <property type="evidence" value="ECO:0007669"/>
    <property type="project" value="UniProtKB-SubCell"/>
</dbReference>
<dbReference type="GO" id="GO:0005524">
    <property type="term" value="F:ATP binding"/>
    <property type="evidence" value="ECO:0007669"/>
    <property type="project" value="UniProtKB-UniRule"/>
</dbReference>
<dbReference type="GO" id="GO:0004821">
    <property type="term" value="F:histidine-tRNA ligase activity"/>
    <property type="evidence" value="ECO:0007669"/>
    <property type="project" value="UniProtKB-UniRule"/>
</dbReference>
<dbReference type="GO" id="GO:0006427">
    <property type="term" value="P:histidyl-tRNA aminoacylation"/>
    <property type="evidence" value="ECO:0007669"/>
    <property type="project" value="UniProtKB-UniRule"/>
</dbReference>
<dbReference type="CDD" id="cd00773">
    <property type="entry name" value="HisRS-like_core"/>
    <property type="match status" value="1"/>
</dbReference>
<dbReference type="Gene3D" id="3.40.50.800">
    <property type="entry name" value="Anticodon-binding domain"/>
    <property type="match status" value="1"/>
</dbReference>
<dbReference type="Gene3D" id="3.30.930.10">
    <property type="entry name" value="Bira Bifunctional Protein, Domain 2"/>
    <property type="match status" value="1"/>
</dbReference>
<dbReference type="HAMAP" id="MF_00127">
    <property type="entry name" value="His_tRNA_synth"/>
    <property type="match status" value="1"/>
</dbReference>
<dbReference type="InterPro" id="IPR006195">
    <property type="entry name" value="aa-tRNA-synth_II"/>
</dbReference>
<dbReference type="InterPro" id="IPR045864">
    <property type="entry name" value="aa-tRNA-synth_II/BPL/LPL"/>
</dbReference>
<dbReference type="InterPro" id="IPR004154">
    <property type="entry name" value="Anticodon-bd"/>
</dbReference>
<dbReference type="InterPro" id="IPR036621">
    <property type="entry name" value="Anticodon-bd_dom_sf"/>
</dbReference>
<dbReference type="InterPro" id="IPR015807">
    <property type="entry name" value="His-tRNA-ligase"/>
</dbReference>
<dbReference type="InterPro" id="IPR041715">
    <property type="entry name" value="HisRS-like_core"/>
</dbReference>
<dbReference type="InterPro" id="IPR004516">
    <property type="entry name" value="HisRS/HisZ"/>
</dbReference>
<dbReference type="NCBIfam" id="TIGR00442">
    <property type="entry name" value="hisS"/>
    <property type="match status" value="1"/>
</dbReference>
<dbReference type="PANTHER" id="PTHR43707:SF1">
    <property type="entry name" value="HISTIDINE--TRNA LIGASE, MITOCHONDRIAL-RELATED"/>
    <property type="match status" value="1"/>
</dbReference>
<dbReference type="PANTHER" id="PTHR43707">
    <property type="entry name" value="HISTIDYL-TRNA SYNTHETASE"/>
    <property type="match status" value="1"/>
</dbReference>
<dbReference type="Pfam" id="PF03129">
    <property type="entry name" value="HGTP_anticodon"/>
    <property type="match status" value="1"/>
</dbReference>
<dbReference type="Pfam" id="PF13393">
    <property type="entry name" value="tRNA-synt_His"/>
    <property type="match status" value="1"/>
</dbReference>
<dbReference type="PIRSF" id="PIRSF001549">
    <property type="entry name" value="His-tRNA_synth"/>
    <property type="match status" value="1"/>
</dbReference>
<dbReference type="SUPFAM" id="SSF52954">
    <property type="entry name" value="Class II aaRS ABD-related"/>
    <property type="match status" value="1"/>
</dbReference>
<dbReference type="SUPFAM" id="SSF55681">
    <property type="entry name" value="Class II aaRS and biotin synthetases"/>
    <property type="match status" value="1"/>
</dbReference>
<dbReference type="PROSITE" id="PS50862">
    <property type="entry name" value="AA_TRNA_LIGASE_II"/>
    <property type="match status" value="1"/>
</dbReference>
<proteinExistence type="inferred from homology"/>
<feature type="chain" id="PRO_0000136318" description="Histidine--tRNA ligase">
    <location>
        <begin position="1"/>
        <end position="423"/>
    </location>
</feature>
<comment type="catalytic activity">
    <reaction evidence="1">
        <text>tRNA(His) + L-histidine + ATP = L-histidyl-tRNA(His) + AMP + diphosphate + H(+)</text>
        <dbReference type="Rhea" id="RHEA:17313"/>
        <dbReference type="Rhea" id="RHEA-COMP:9665"/>
        <dbReference type="Rhea" id="RHEA-COMP:9689"/>
        <dbReference type="ChEBI" id="CHEBI:15378"/>
        <dbReference type="ChEBI" id="CHEBI:30616"/>
        <dbReference type="ChEBI" id="CHEBI:33019"/>
        <dbReference type="ChEBI" id="CHEBI:57595"/>
        <dbReference type="ChEBI" id="CHEBI:78442"/>
        <dbReference type="ChEBI" id="CHEBI:78527"/>
        <dbReference type="ChEBI" id="CHEBI:456215"/>
        <dbReference type="EC" id="6.1.1.21"/>
    </reaction>
</comment>
<comment type="subcellular location">
    <subcellularLocation>
        <location evidence="1">Cytoplasm</location>
    </subcellularLocation>
</comment>
<comment type="similarity">
    <text evidence="1">Belongs to the class-II aminoacyl-tRNA synthetase family.</text>
</comment>
<sequence length="423" mass="48853">MKIERLKGFRDHYPDDMEIRYDFIKKMMDTAISFGYKMIDFPSLESMDLYRLKSGTELVEQTFSFTDKGGREVTMIPEATPSTMRMLTSRKDIKMPARWFSIPKVWRYEEPQEGRYREHIQFNADMFGADSPEADAEIIGLAATILDNLGLSGQYEINVNDRYLMELILRDLGSNNPVDLFPVIDRFKKMDLTDFKKRLLKDLDDDASEKLISLLMNRIDINDVERLLNGYANDVMERVKRLKDTFALTSKYTKSKLNIDLSVVRGLSYYTGIVFEAFDISGELRAILGGGRYDNLSNLFINESIPAVGFAIGDAVIELLLKRNNLWNYKDKRKRYYVVNISSSPEAHIEILNKIRGSGNIAISEVNKRRMQTIIKYAESIKCDFLIIIGDRELSSKKMTIKNLRTQEQAEMNIDDFINNINS</sequence>
<accession>Q6L1Q5</accession>
<gene>
    <name evidence="1" type="primary">hisS</name>
    <name type="ordered locus">PTO0512</name>
</gene>
<protein>
    <recommendedName>
        <fullName evidence="1">Histidine--tRNA ligase</fullName>
        <ecNumber evidence="1">6.1.1.21</ecNumber>
    </recommendedName>
    <alternativeName>
        <fullName evidence="1">Histidyl-tRNA synthetase</fullName>
        <shortName evidence="1">HisRS</shortName>
    </alternativeName>
</protein>
<reference key="1">
    <citation type="journal article" date="2004" name="Proc. Natl. Acad. Sci. U.S.A.">
        <title>Genome sequence of Picrophilus torridus and its implications for life around pH 0.</title>
        <authorList>
            <person name="Fuetterer O."/>
            <person name="Angelov A."/>
            <person name="Liesegang H."/>
            <person name="Gottschalk G."/>
            <person name="Schleper C."/>
            <person name="Schepers B."/>
            <person name="Dock C."/>
            <person name="Antranikian G."/>
            <person name="Liebl W."/>
        </authorList>
    </citation>
    <scope>NUCLEOTIDE SEQUENCE [LARGE SCALE GENOMIC DNA]</scope>
    <source>
        <strain>ATCC 700027 / DSM 9790 / JCM 10055 / NBRC 100828 / KAW 2/3</strain>
    </source>
</reference>
<evidence type="ECO:0000255" key="1">
    <source>
        <dbReference type="HAMAP-Rule" id="MF_00127"/>
    </source>
</evidence>
<keyword id="KW-0030">Aminoacyl-tRNA synthetase</keyword>
<keyword id="KW-0067">ATP-binding</keyword>
<keyword id="KW-0963">Cytoplasm</keyword>
<keyword id="KW-0436">Ligase</keyword>
<keyword id="KW-0547">Nucleotide-binding</keyword>
<keyword id="KW-0648">Protein biosynthesis</keyword>
<organism>
    <name type="scientific">Picrophilus torridus (strain ATCC 700027 / DSM 9790 / JCM 10055 / NBRC 100828 / KAW 2/3)</name>
    <dbReference type="NCBI Taxonomy" id="1122961"/>
    <lineage>
        <taxon>Archaea</taxon>
        <taxon>Methanobacteriati</taxon>
        <taxon>Thermoplasmatota</taxon>
        <taxon>Thermoplasmata</taxon>
        <taxon>Thermoplasmatales</taxon>
        <taxon>Picrophilaceae</taxon>
        <taxon>Picrophilus</taxon>
    </lineage>
</organism>